<evidence type="ECO:0000255" key="1">
    <source>
        <dbReference type="HAMAP-Rule" id="MF_00361"/>
    </source>
</evidence>
<sequence length="265" mass="29451">MKIAIFNNDAKNSQMITQSLVASLEKNGLTIDNQHPDIVITVGGDGTLLGAFQHYVDQIDTIRFVGLHTGHLGFYTDWLSTELANLVSSLTHDNGQRVSYPLLDMTVVHESGEQYHFLALNEAAIKQPVGTLVADIYLGGQLFERFRGDGIAVATPTGSTAYNKANGGAVLHPKLSAIQMSEIASINNRVFRTLGSPLVVPKGEEIIVKPKSNHFLVMYDQSEIKGRHINELRFRVADKQVHFAAYRHVDFWQRVHRAFINDIES</sequence>
<comment type="function">
    <text evidence="1">Involved in the regulation of the intracellular balance of NAD and NADP, and is a key enzyme in the biosynthesis of NADP. Catalyzes specifically the phosphorylation on 2'-hydroxyl of the adenosine moiety of NAD to yield NADP.</text>
</comment>
<comment type="catalytic activity">
    <reaction evidence="1">
        <text>NAD(+) + ATP = ADP + NADP(+) + H(+)</text>
        <dbReference type="Rhea" id="RHEA:18629"/>
        <dbReference type="ChEBI" id="CHEBI:15378"/>
        <dbReference type="ChEBI" id="CHEBI:30616"/>
        <dbReference type="ChEBI" id="CHEBI:57540"/>
        <dbReference type="ChEBI" id="CHEBI:58349"/>
        <dbReference type="ChEBI" id="CHEBI:456216"/>
        <dbReference type="EC" id="2.7.1.23"/>
    </reaction>
</comment>
<comment type="cofactor">
    <cofactor evidence="1">
        <name>a divalent metal cation</name>
        <dbReference type="ChEBI" id="CHEBI:60240"/>
    </cofactor>
</comment>
<comment type="subcellular location">
    <subcellularLocation>
        <location evidence="1">Cytoplasm</location>
    </subcellularLocation>
</comment>
<comment type="similarity">
    <text evidence="1">Belongs to the NAD kinase family.</text>
</comment>
<name>NADK_LEUCK</name>
<reference key="1">
    <citation type="journal article" date="2008" name="J. Bacteriol.">
        <title>Complete genome sequence of Leuconostoc citreum KM20.</title>
        <authorList>
            <person name="Kim J.F."/>
            <person name="Jeong H."/>
            <person name="Lee J.-S."/>
            <person name="Choi S.-H."/>
            <person name="Ha M."/>
            <person name="Hur C.-G."/>
            <person name="Kim J.-S."/>
            <person name="Lee S."/>
            <person name="Park H.-S."/>
            <person name="Park Y.-H."/>
            <person name="Oh T.K."/>
        </authorList>
    </citation>
    <scope>NUCLEOTIDE SEQUENCE [LARGE SCALE GENOMIC DNA]</scope>
    <source>
        <strain>KM20</strain>
    </source>
</reference>
<protein>
    <recommendedName>
        <fullName evidence="1">NAD kinase</fullName>
        <ecNumber evidence="1">2.7.1.23</ecNumber>
    </recommendedName>
    <alternativeName>
        <fullName evidence="1">ATP-dependent NAD kinase</fullName>
    </alternativeName>
</protein>
<keyword id="KW-0067">ATP-binding</keyword>
<keyword id="KW-0963">Cytoplasm</keyword>
<keyword id="KW-0418">Kinase</keyword>
<keyword id="KW-0520">NAD</keyword>
<keyword id="KW-0521">NADP</keyword>
<keyword id="KW-0547">Nucleotide-binding</keyword>
<keyword id="KW-1185">Reference proteome</keyword>
<keyword id="KW-0808">Transferase</keyword>
<organism>
    <name type="scientific">Leuconostoc citreum (strain KM20)</name>
    <dbReference type="NCBI Taxonomy" id="349519"/>
    <lineage>
        <taxon>Bacteria</taxon>
        <taxon>Bacillati</taxon>
        <taxon>Bacillota</taxon>
        <taxon>Bacilli</taxon>
        <taxon>Lactobacillales</taxon>
        <taxon>Lactobacillaceae</taxon>
        <taxon>Leuconostoc</taxon>
    </lineage>
</organism>
<proteinExistence type="inferred from homology"/>
<feature type="chain" id="PRO_1000120871" description="NAD kinase">
    <location>
        <begin position="1"/>
        <end position="265"/>
    </location>
</feature>
<feature type="active site" description="Proton acceptor" evidence="1">
    <location>
        <position position="45"/>
    </location>
</feature>
<feature type="binding site" evidence="1">
    <location>
        <begin position="45"/>
        <end position="46"/>
    </location>
    <ligand>
        <name>NAD(+)</name>
        <dbReference type="ChEBI" id="CHEBI:57540"/>
    </ligand>
</feature>
<feature type="binding site" evidence="1">
    <location>
        <begin position="121"/>
        <end position="122"/>
    </location>
    <ligand>
        <name>NAD(+)</name>
        <dbReference type="ChEBI" id="CHEBI:57540"/>
    </ligand>
</feature>
<feature type="binding site" evidence="1">
    <location>
        <position position="147"/>
    </location>
    <ligand>
        <name>NAD(+)</name>
        <dbReference type="ChEBI" id="CHEBI:57540"/>
    </ligand>
</feature>
<feature type="binding site" evidence="1">
    <location>
        <position position="149"/>
    </location>
    <ligand>
        <name>NAD(+)</name>
        <dbReference type="ChEBI" id="CHEBI:57540"/>
    </ligand>
</feature>
<feature type="binding site" evidence="1">
    <location>
        <position position="184"/>
    </location>
    <ligand>
        <name>NAD(+)</name>
        <dbReference type="ChEBI" id="CHEBI:57540"/>
    </ligand>
</feature>
<feature type="binding site" evidence="1">
    <location>
        <position position="221"/>
    </location>
    <ligand>
        <name>NAD(+)</name>
        <dbReference type="ChEBI" id="CHEBI:57540"/>
    </ligand>
</feature>
<accession>B1MZP8</accession>
<dbReference type="EC" id="2.7.1.23" evidence="1"/>
<dbReference type="EMBL" id="DQ489736">
    <property type="protein sequence ID" value="ACA83000.1"/>
    <property type="molecule type" value="Genomic_DNA"/>
</dbReference>
<dbReference type="RefSeq" id="WP_004905897.1">
    <property type="nucleotide sequence ID" value="NC_010471.1"/>
</dbReference>
<dbReference type="SMR" id="B1MZP8"/>
<dbReference type="STRING" id="349519.LCK_01173"/>
<dbReference type="KEGG" id="lci:LCK_01173"/>
<dbReference type="eggNOG" id="COG0061">
    <property type="taxonomic scope" value="Bacteria"/>
</dbReference>
<dbReference type="HOGENOM" id="CLU_008831_0_3_9"/>
<dbReference type="OrthoDB" id="9774737at2"/>
<dbReference type="Proteomes" id="UP000002166">
    <property type="component" value="Chromosome"/>
</dbReference>
<dbReference type="GO" id="GO:0005737">
    <property type="term" value="C:cytoplasm"/>
    <property type="evidence" value="ECO:0007669"/>
    <property type="project" value="UniProtKB-SubCell"/>
</dbReference>
<dbReference type="GO" id="GO:0005524">
    <property type="term" value="F:ATP binding"/>
    <property type="evidence" value="ECO:0007669"/>
    <property type="project" value="UniProtKB-KW"/>
</dbReference>
<dbReference type="GO" id="GO:0046872">
    <property type="term" value="F:metal ion binding"/>
    <property type="evidence" value="ECO:0007669"/>
    <property type="project" value="UniProtKB-UniRule"/>
</dbReference>
<dbReference type="GO" id="GO:0051287">
    <property type="term" value="F:NAD binding"/>
    <property type="evidence" value="ECO:0007669"/>
    <property type="project" value="UniProtKB-ARBA"/>
</dbReference>
<dbReference type="GO" id="GO:0003951">
    <property type="term" value="F:NAD+ kinase activity"/>
    <property type="evidence" value="ECO:0007669"/>
    <property type="project" value="UniProtKB-UniRule"/>
</dbReference>
<dbReference type="GO" id="GO:0019674">
    <property type="term" value="P:NAD metabolic process"/>
    <property type="evidence" value="ECO:0007669"/>
    <property type="project" value="InterPro"/>
</dbReference>
<dbReference type="GO" id="GO:0006741">
    <property type="term" value="P:NADP biosynthetic process"/>
    <property type="evidence" value="ECO:0007669"/>
    <property type="project" value="UniProtKB-UniRule"/>
</dbReference>
<dbReference type="Gene3D" id="3.40.50.10330">
    <property type="entry name" value="Probable inorganic polyphosphate/atp-NAD kinase, domain 1"/>
    <property type="match status" value="1"/>
</dbReference>
<dbReference type="Gene3D" id="2.60.200.30">
    <property type="entry name" value="Probable inorganic polyphosphate/atp-NAD kinase, domain 2"/>
    <property type="match status" value="1"/>
</dbReference>
<dbReference type="HAMAP" id="MF_00361">
    <property type="entry name" value="NAD_kinase"/>
    <property type="match status" value="1"/>
</dbReference>
<dbReference type="InterPro" id="IPR017438">
    <property type="entry name" value="ATP-NAD_kinase_N"/>
</dbReference>
<dbReference type="InterPro" id="IPR017437">
    <property type="entry name" value="ATP-NAD_kinase_PpnK-typ_C"/>
</dbReference>
<dbReference type="InterPro" id="IPR016064">
    <property type="entry name" value="NAD/diacylglycerol_kinase_sf"/>
</dbReference>
<dbReference type="InterPro" id="IPR002504">
    <property type="entry name" value="NADK"/>
</dbReference>
<dbReference type="NCBIfam" id="NF003424">
    <property type="entry name" value="PRK04885.1"/>
    <property type="match status" value="1"/>
</dbReference>
<dbReference type="PANTHER" id="PTHR20275">
    <property type="entry name" value="NAD KINASE"/>
    <property type="match status" value="1"/>
</dbReference>
<dbReference type="PANTHER" id="PTHR20275:SF0">
    <property type="entry name" value="NAD KINASE"/>
    <property type="match status" value="1"/>
</dbReference>
<dbReference type="Pfam" id="PF01513">
    <property type="entry name" value="NAD_kinase"/>
    <property type="match status" value="1"/>
</dbReference>
<dbReference type="Pfam" id="PF20143">
    <property type="entry name" value="NAD_kinase_C"/>
    <property type="match status" value="1"/>
</dbReference>
<dbReference type="SUPFAM" id="SSF111331">
    <property type="entry name" value="NAD kinase/diacylglycerol kinase-like"/>
    <property type="match status" value="1"/>
</dbReference>
<gene>
    <name evidence="1" type="primary">nadK</name>
    <name type="ordered locus">LCK_01173</name>
</gene>